<feature type="chain" id="PRO_1000085328" description="Chaperone protein DnaJ">
    <location>
        <begin position="1"/>
        <end position="381"/>
    </location>
</feature>
<feature type="domain" description="J" evidence="1">
    <location>
        <begin position="5"/>
        <end position="70"/>
    </location>
</feature>
<feature type="repeat" description="CXXCXGXG motif">
    <location>
        <begin position="149"/>
        <end position="156"/>
    </location>
</feature>
<feature type="repeat" description="CXXCXGXG motif">
    <location>
        <begin position="166"/>
        <end position="173"/>
    </location>
</feature>
<feature type="repeat" description="CXXCXGXG motif">
    <location>
        <begin position="188"/>
        <end position="195"/>
    </location>
</feature>
<feature type="repeat" description="CXXCXGXG motif">
    <location>
        <begin position="202"/>
        <end position="209"/>
    </location>
</feature>
<feature type="zinc finger region" description="CR-type" evidence="1">
    <location>
        <begin position="136"/>
        <end position="214"/>
    </location>
</feature>
<feature type="binding site" evidence="1">
    <location>
        <position position="149"/>
    </location>
    <ligand>
        <name>Zn(2+)</name>
        <dbReference type="ChEBI" id="CHEBI:29105"/>
        <label>1</label>
    </ligand>
</feature>
<feature type="binding site" evidence="1">
    <location>
        <position position="152"/>
    </location>
    <ligand>
        <name>Zn(2+)</name>
        <dbReference type="ChEBI" id="CHEBI:29105"/>
        <label>1</label>
    </ligand>
</feature>
<feature type="binding site" evidence="1">
    <location>
        <position position="166"/>
    </location>
    <ligand>
        <name>Zn(2+)</name>
        <dbReference type="ChEBI" id="CHEBI:29105"/>
        <label>2</label>
    </ligand>
</feature>
<feature type="binding site" evidence="1">
    <location>
        <position position="169"/>
    </location>
    <ligand>
        <name>Zn(2+)</name>
        <dbReference type="ChEBI" id="CHEBI:29105"/>
        <label>2</label>
    </ligand>
</feature>
<feature type="binding site" evidence="1">
    <location>
        <position position="188"/>
    </location>
    <ligand>
        <name>Zn(2+)</name>
        <dbReference type="ChEBI" id="CHEBI:29105"/>
        <label>2</label>
    </ligand>
</feature>
<feature type="binding site" evidence="1">
    <location>
        <position position="191"/>
    </location>
    <ligand>
        <name>Zn(2+)</name>
        <dbReference type="ChEBI" id="CHEBI:29105"/>
        <label>2</label>
    </ligand>
</feature>
<feature type="binding site" evidence="1">
    <location>
        <position position="202"/>
    </location>
    <ligand>
        <name>Zn(2+)</name>
        <dbReference type="ChEBI" id="CHEBI:29105"/>
        <label>1</label>
    </ligand>
</feature>
<feature type="binding site" evidence="1">
    <location>
        <position position="205"/>
    </location>
    <ligand>
        <name>Zn(2+)</name>
        <dbReference type="ChEBI" id="CHEBI:29105"/>
        <label>1</label>
    </ligand>
</feature>
<evidence type="ECO:0000255" key="1">
    <source>
        <dbReference type="HAMAP-Rule" id="MF_01152"/>
    </source>
</evidence>
<keyword id="KW-0143">Chaperone</keyword>
<keyword id="KW-0963">Cytoplasm</keyword>
<keyword id="KW-0235">DNA replication</keyword>
<keyword id="KW-0479">Metal-binding</keyword>
<keyword id="KW-0677">Repeat</keyword>
<keyword id="KW-0346">Stress response</keyword>
<keyword id="KW-0862">Zinc</keyword>
<keyword id="KW-0863">Zinc-finger</keyword>
<dbReference type="EMBL" id="CP000789">
    <property type="protein sequence ID" value="ABU70125.1"/>
    <property type="molecule type" value="Genomic_DNA"/>
</dbReference>
<dbReference type="RefSeq" id="WP_012127137.1">
    <property type="nucleotide sequence ID" value="NC_022269.1"/>
</dbReference>
<dbReference type="SMR" id="A7MWW1"/>
<dbReference type="KEGG" id="vha:VIBHAR_01135"/>
<dbReference type="PATRIC" id="fig|338187.25.peg.1493"/>
<dbReference type="Proteomes" id="UP000008152">
    <property type="component" value="Chromosome I"/>
</dbReference>
<dbReference type="GO" id="GO:0005737">
    <property type="term" value="C:cytoplasm"/>
    <property type="evidence" value="ECO:0007669"/>
    <property type="project" value="UniProtKB-SubCell"/>
</dbReference>
<dbReference type="GO" id="GO:0005524">
    <property type="term" value="F:ATP binding"/>
    <property type="evidence" value="ECO:0007669"/>
    <property type="project" value="InterPro"/>
</dbReference>
<dbReference type="GO" id="GO:0031072">
    <property type="term" value="F:heat shock protein binding"/>
    <property type="evidence" value="ECO:0007669"/>
    <property type="project" value="InterPro"/>
</dbReference>
<dbReference type="GO" id="GO:0051082">
    <property type="term" value="F:unfolded protein binding"/>
    <property type="evidence" value="ECO:0007669"/>
    <property type="project" value="UniProtKB-UniRule"/>
</dbReference>
<dbReference type="GO" id="GO:0008270">
    <property type="term" value="F:zinc ion binding"/>
    <property type="evidence" value="ECO:0007669"/>
    <property type="project" value="UniProtKB-UniRule"/>
</dbReference>
<dbReference type="GO" id="GO:0051085">
    <property type="term" value="P:chaperone cofactor-dependent protein refolding"/>
    <property type="evidence" value="ECO:0007669"/>
    <property type="project" value="TreeGrafter"/>
</dbReference>
<dbReference type="GO" id="GO:0006260">
    <property type="term" value="P:DNA replication"/>
    <property type="evidence" value="ECO:0007669"/>
    <property type="project" value="UniProtKB-KW"/>
</dbReference>
<dbReference type="GO" id="GO:0042026">
    <property type="term" value="P:protein refolding"/>
    <property type="evidence" value="ECO:0007669"/>
    <property type="project" value="TreeGrafter"/>
</dbReference>
<dbReference type="GO" id="GO:0009408">
    <property type="term" value="P:response to heat"/>
    <property type="evidence" value="ECO:0007669"/>
    <property type="project" value="InterPro"/>
</dbReference>
<dbReference type="CDD" id="cd06257">
    <property type="entry name" value="DnaJ"/>
    <property type="match status" value="1"/>
</dbReference>
<dbReference type="CDD" id="cd10747">
    <property type="entry name" value="DnaJ_C"/>
    <property type="match status" value="1"/>
</dbReference>
<dbReference type="CDD" id="cd10719">
    <property type="entry name" value="DnaJ_zf"/>
    <property type="match status" value="1"/>
</dbReference>
<dbReference type="FunFam" id="1.10.287.110:FF:000003">
    <property type="entry name" value="Molecular chaperone DnaJ"/>
    <property type="match status" value="1"/>
</dbReference>
<dbReference type="FunFam" id="2.10.230.10:FF:000002">
    <property type="entry name" value="Molecular chaperone DnaJ"/>
    <property type="match status" value="1"/>
</dbReference>
<dbReference type="FunFam" id="2.60.260.20:FF:000004">
    <property type="entry name" value="Molecular chaperone DnaJ"/>
    <property type="match status" value="1"/>
</dbReference>
<dbReference type="Gene3D" id="1.10.287.110">
    <property type="entry name" value="DnaJ domain"/>
    <property type="match status" value="1"/>
</dbReference>
<dbReference type="Gene3D" id="2.10.230.10">
    <property type="entry name" value="Heat shock protein DnaJ, cysteine-rich domain"/>
    <property type="match status" value="1"/>
</dbReference>
<dbReference type="Gene3D" id="2.60.260.20">
    <property type="entry name" value="Urease metallochaperone UreE, N-terminal domain"/>
    <property type="match status" value="2"/>
</dbReference>
<dbReference type="HAMAP" id="MF_01152">
    <property type="entry name" value="DnaJ"/>
    <property type="match status" value="1"/>
</dbReference>
<dbReference type="InterPro" id="IPR012724">
    <property type="entry name" value="DnaJ"/>
</dbReference>
<dbReference type="InterPro" id="IPR002939">
    <property type="entry name" value="DnaJ_C"/>
</dbReference>
<dbReference type="InterPro" id="IPR001623">
    <property type="entry name" value="DnaJ_domain"/>
</dbReference>
<dbReference type="InterPro" id="IPR018253">
    <property type="entry name" value="DnaJ_domain_CS"/>
</dbReference>
<dbReference type="InterPro" id="IPR008971">
    <property type="entry name" value="HSP40/DnaJ_pept-bd"/>
</dbReference>
<dbReference type="InterPro" id="IPR001305">
    <property type="entry name" value="HSP_DnaJ_Cys-rich_dom"/>
</dbReference>
<dbReference type="InterPro" id="IPR036410">
    <property type="entry name" value="HSP_DnaJ_Cys-rich_dom_sf"/>
</dbReference>
<dbReference type="InterPro" id="IPR036869">
    <property type="entry name" value="J_dom_sf"/>
</dbReference>
<dbReference type="NCBIfam" id="TIGR02349">
    <property type="entry name" value="DnaJ_bact"/>
    <property type="match status" value="1"/>
</dbReference>
<dbReference type="NCBIfam" id="NF008035">
    <property type="entry name" value="PRK10767.1"/>
    <property type="match status" value="1"/>
</dbReference>
<dbReference type="PANTHER" id="PTHR43096:SF48">
    <property type="entry name" value="CHAPERONE PROTEIN DNAJ"/>
    <property type="match status" value="1"/>
</dbReference>
<dbReference type="PANTHER" id="PTHR43096">
    <property type="entry name" value="DNAJ HOMOLOG 1, MITOCHONDRIAL-RELATED"/>
    <property type="match status" value="1"/>
</dbReference>
<dbReference type="Pfam" id="PF00226">
    <property type="entry name" value="DnaJ"/>
    <property type="match status" value="1"/>
</dbReference>
<dbReference type="Pfam" id="PF01556">
    <property type="entry name" value="DnaJ_C"/>
    <property type="match status" value="1"/>
</dbReference>
<dbReference type="Pfam" id="PF00684">
    <property type="entry name" value="DnaJ_CXXCXGXG"/>
    <property type="match status" value="1"/>
</dbReference>
<dbReference type="PRINTS" id="PR00625">
    <property type="entry name" value="JDOMAIN"/>
</dbReference>
<dbReference type="SMART" id="SM00271">
    <property type="entry name" value="DnaJ"/>
    <property type="match status" value="1"/>
</dbReference>
<dbReference type="SUPFAM" id="SSF46565">
    <property type="entry name" value="Chaperone J-domain"/>
    <property type="match status" value="1"/>
</dbReference>
<dbReference type="SUPFAM" id="SSF57938">
    <property type="entry name" value="DnaJ/Hsp40 cysteine-rich domain"/>
    <property type="match status" value="1"/>
</dbReference>
<dbReference type="SUPFAM" id="SSF49493">
    <property type="entry name" value="HSP40/DnaJ peptide-binding domain"/>
    <property type="match status" value="2"/>
</dbReference>
<dbReference type="PROSITE" id="PS00636">
    <property type="entry name" value="DNAJ_1"/>
    <property type="match status" value="1"/>
</dbReference>
<dbReference type="PROSITE" id="PS50076">
    <property type="entry name" value="DNAJ_2"/>
    <property type="match status" value="1"/>
</dbReference>
<dbReference type="PROSITE" id="PS51188">
    <property type="entry name" value="ZF_CR"/>
    <property type="match status" value="1"/>
</dbReference>
<accession>A7MWW1</accession>
<gene>
    <name evidence="1" type="primary">dnaJ</name>
    <name type="ordered locus">VIBHAR_01135</name>
</gene>
<comment type="function">
    <text evidence="1">Participates actively in the response to hyperosmotic and heat shock by preventing the aggregation of stress-denatured proteins and by disaggregating proteins, also in an autonomous, DnaK-independent fashion. Unfolded proteins bind initially to DnaJ; upon interaction with the DnaJ-bound protein, DnaK hydrolyzes its bound ATP, resulting in the formation of a stable complex. GrpE releases ADP from DnaK; ATP binding to DnaK triggers the release of the substrate protein, thus completing the reaction cycle. Several rounds of ATP-dependent interactions between DnaJ, DnaK and GrpE are required for fully efficient folding. Also involved, together with DnaK and GrpE, in the DNA replication of plasmids through activation of initiation proteins.</text>
</comment>
<comment type="cofactor">
    <cofactor evidence="1">
        <name>Zn(2+)</name>
        <dbReference type="ChEBI" id="CHEBI:29105"/>
    </cofactor>
    <text evidence="1">Binds 2 Zn(2+) ions per monomer.</text>
</comment>
<comment type="subunit">
    <text evidence="1">Homodimer.</text>
</comment>
<comment type="subcellular location">
    <subcellularLocation>
        <location evidence="1">Cytoplasm</location>
    </subcellularLocation>
</comment>
<comment type="domain">
    <text evidence="1">The J domain is necessary and sufficient to stimulate DnaK ATPase activity. Zinc center 1 plays an important role in the autonomous, DnaK-independent chaperone activity of DnaJ. Zinc center 2 is essential for interaction with DnaK and for DnaJ activity.</text>
</comment>
<comment type="similarity">
    <text evidence="1">Belongs to the DnaJ family.</text>
</comment>
<name>DNAJ_VIBC1</name>
<organism>
    <name type="scientific">Vibrio campbellii (strain ATCC BAA-1116)</name>
    <dbReference type="NCBI Taxonomy" id="2902295"/>
    <lineage>
        <taxon>Bacteria</taxon>
        <taxon>Pseudomonadati</taxon>
        <taxon>Pseudomonadota</taxon>
        <taxon>Gammaproteobacteria</taxon>
        <taxon>Vibrionales</taxon>
        <taxon>Vibrionaceae</taxon>
        <taxon>Vibrio</taxon>
    </lineage>
</organism>
<protein>
    <recommendedName>
        <fullName evidence="1">Chaperone protein DnaJ</fullName>
    </recommendedName>
</protein>
<proteinExistence type="inferred from homology"/>
<sequence length="381" mass="41093">MSKRDFYEVLGVGRDASERDIKKAYKRLAMKFHPDRNQGDESAADKFKEVKEAYEILTDPQKKAAYDQYGHAAFEQGGGFGGGGFGGGGADFGDIFGDVFGDIFGGGRRGGGQQRAQRGADLRYNMELSLEEAVRGVSKEIEVPTLVHCDTCDGSGAKKGSSAETCGTCHGHGQVQMRQGFFAVQQTCPTCHGKGKIIKDPCNECHGQGRKQKTKTLNVKIPAGVDTGDRIRLSGEGEAGEMGAPAGDLYVQVHVREHHIFEREGNNLYCEVPVSFAMAALGGEVEVPTLDGRVNLKVPTETQTGRMFRMRGKGVKGVRGGGVGDLIVKLVVETPVNLSSRQKELLKEFDESCGGDAATKHKPKSEGFFNGVKKFFDDLTS</sequence>
<reference key="1">
    <citation type="submission" date="2007-08" db="EMBL/GenBank/DDBJ databases">
        <authorList>
            <consortium name="The Vibrio harveyi Genome Sequencing Project"/>
            <person name="Bassler B."/>
            <person name="Clifton S.W."/>
            <person name="Fulton L."/>
            <person name="Delehaunty K."/>
            <person name="Fronick C."/>
            <person name="Harrison M."/>
            <person name="Markivic C."/>
            <person name="Fulton R."/>
            <person name="Tin-Wollam A.-M."/>
            <person name="Shah N."/>
            <person name="Pepin K."/>
            <person name="Nash W."/>
            <person name="Thiruvilangam P."/>
            <person name="Bhonagiri V."/>
            <person name="Waters C."/>
            <person name="Tu K.C."/>
            <person name="Irgon J."/>
            <person name="Wilson R.K."/>
        </authorList>
    </citation>
    <scope>NUCLEOTIDE SEQUENCE [LARGE SCALE GENOMIC DNA]</scope>
    <source>
        <strain>ATCC BAA-1116 / BB120</strain>
    </source>
</reference>